<name>NFUA_PECAS</name>
<organism>
    <name type="scientific">Pectobacterium atrosepticum (strain SCRI 1043 / ATCC BAA-672)</name>
    <name type="common">Erwinia carotovora subsp. atroseptica</name>
    <dbReference type="NCBI Taxonomy" id="218491"/>
    <lineage>
        <taxon>Bacteria</taxon>
        <taxon>Pseudomonadati</taxon>
        <taxon>Pseudomonadota</taxon>
        <taxon>Gammaproteobacteria</taxon>
        <taxon>Enterobacterales</taxon>
        <taxon>Pectobacteriaceae</taxon>
        <taxon>Pectobacterium</taxon>
    </lineage>
</organism>
<accession>Q6CZL7</accession>
<protein>
    <recommendedName>
        <fullName evidence="1">Fe/S biogenesis protein NfuA</fullName>
    </recommendedName>
</protein>
<reference key="1">
    <citation type="journal article" date="2004" name="Proc. Natl. Acad. Sci. U.S.A.">
        <title>Genome sequence of the enterobacterial phytopathogen Erwinia carotovora subsp. atroseptica and characterization of virulence factors.</title>
        <authorList>
            <person name="Bell K.S."/>
            <person name="Sebaihia M."/>
            <person name="Pritchard L."/>
            <person name="Holden M.T.G."/>
            <person name="Hyman L.J."/>
            <person name="Holeva M.C."/>
            <person name="Thomson N.R."/>
            <person name="Bentley S.D."/>
            <person name="Churcher L.J.C."/>
            <person name="Mungall K."/>
            <person name="Atkin R."/>
            <person name="Bason N."/>
            <person name="Brooks K."/>
            <person name="Chillingworth T."/>
            <person name="Clark K."/>
            <person name="Doggett J."/>
            <person name="Fraser A."/>
            <person name="Hance Z."/>
            <person name="Hauser H."/>
            <person name="Jagels K."/>
            <person name="Moule S."/>
            <person name="Norbertczak H."/>
            <person name="Ormond D."/>
            <person name="Price C."/>
            <person name="Quail M.A."/>
            <person name="Sanders M."/>
            <person name="Walker D."/>
            <person name="Whitehead S."/>
            <person name="Salmond G.P.C."/>
            <person name="Birch P.R.J."/>
            <person name="Parkhill J."/>
            <person name="Toth I.K."/>
        </authorList>
    </citation>
    <scope>NUCLEOTIDE SEQUENCE [LARGE SCALE GENOMIC DNA]</scope>
    <source>
        <strain>SCRI 1043 / ATCC BAA-672</strain>
    </source>
</reference>
<dbReference type="EMBL" id="BX950851">
    <property type="protein sequence ID" value="CAG77031.1"/>
    <property type="molecule type" value="Genomic_DNA"/>
</dbReference>
<dbReference type="RefSeq" id="WP_011095606.1">
    <property type="nucleotide sequence ID" value="NC_004547.2"/>
</dbReference>
<dbReference type="SMR" id="Q6CZL7"/>
<dbReference type="STRING" id="218491.ECA4134"/>
<dbReference type="KEGG" id="eca:ECA4134"/>
<dbReference type="PATRIC" id="fig|218491.5.peg.4205"/>
<dbReference type="eggNOG" id="COG0316">
    <property type="taxonomic scope" value="Bacteria"/>
</dbReference>
<dbReference type="eggNOG" id="COG0694">
    <property type="taxonomic scope" value="Bacteria"/>
</dbReference>
<dbReference type="HOGENOM" id="CLU_094569_0_0_6"/>
<dbReference type="OrthoDB" id="9785450at2"/>
<dbReference type="Proteomes" id="UP000007966">
    <property type="component" value="Chromosome"/>
</dbReference>
<dbReference type="GO" id="GO:0051539">
    <property type="term" value="F:4 iron, 4 sulfur cluster binding"/>
    <property type="evidence" value="ECO:0007669"/>
    <property type="project" value="UniProtKB-UniRule"/>
</dbReference>
<dbReference type="GO" id="GO:0005506">
    <property type="term" value="F:iron ion binding"/>
    <property type="evidence" value="ECO:0007669"/>
    <property type="project" value="InterPro"/>
</dbReference>
<dbReference type="GO" id="GO:0016226">
    <property type="term" value="P:iron-sulfur cluster assembly"/>
    <property type="evidence" value="ECO:0007669"/>
    <property type="project" value="UniProtKB-UniRule"/>
</dbReference>
<dbReference type="GO" id="GO:0051604">
    <property type="term" value="P:protein maturation"/>
    <property type="evidence" value="ECO:0007669"/>
    <property type="project" value="UniProtKB-UniRule"/>
</dbReference>
<dbReference type="FunFam" id="3.30.300.130:FF:000002">
    <property type="entry name" value="Fe/S biogenesis protein NfuA"/>
    <property type="match status" value="1"/>
</dbReference>
<dbReference type="Gene3D" id="3.30.300.130">
    <property type="entry name" value="Fe-S cluster assembly (FSCA)"/>
    <property type="match status" value="1"/>
</dbReference>
<dbReference type="Gene3D" id="2.60.300.12">
    <property type="entry name" value="HesB-like domain"/>
    <property type="match status" value="1"/>
</dbReference>
<dbReference type="HAMAP" id="MF_01637">
    <property type="entry name" value="Fe_S_biogen_NfuA"/>
    <property type="match status" value="1"/>
</dbReference>
<dbReference type="InterPro" id="IPR017726">
    <property type="entry name" value="Fe/S_biogenesis_protein_NfuA"/>
</dbReference>
<dbReference type="InterPro" id="IPR000361">
    <property type="entry name" value="FeS_biogenesis"/>
</dbReference>
<dbReference type="InterPro" id="IPR034904">
    <property type="entry name" value="FSCA_dom_sf"/>
</dbReference>
<dbReference type="InterPro" id="IPR035903">
    <property type="entry name" value="HesB-like_dom_sf"/>
</dbReference>
<dbReference type="InterPro" id="IPR001075">
    <property type="entry name" value="NIF_FeS_clus_asmbl_NifU_C"/>
</dbReference>
<dbReference type="NCBIfam" id="NF008392">
    <property type="entry name" value="PRK11190.1"/>
    <property type="match status" value="1"/>
</dbReference>
<dbReference type="NCBIfam" id="TIGR03341">
    <property type="entry name" value="YhgI_GntY"/>
    <property type="match status" value="1"/>
</dbReference>
<dbReference type="PANTHER" id="PTHR11178:SF51">
    <property type="entry name" value="FE_S BIOGENESIS PROTEIN NFUA"/>
    <property type="match status" value="1"/>
</dbReference>
<dbReference type="PANTHER" id="PTHR11178">
    <property type="entry name" value="IRON-SULFUR CLUSTER SCAFFOLD PROTEIN NFU-RELATED"/>
    <property type="match status" value="1"/>
</dbReference>
<dbReference type="Pfam" id="PF01521">
    <property type="entry name" value="Fe-S_biosyn"/>
    <property type="match status" value="1"/>
</dbReference>
<dbReference type="Pfam" id="PF01106">
    <property type="entry name" value="NifU"/>
    <property type="match status" value="1"/>
</dbReference>
<dbReference type="SUPFAM" id="SSF117916">
    <property type="entry name" value="Fe-S cluster assembly (FSCA) domain-like"/>
    <property type="match status" value="1"/>
</dbReference>
<dbReference type="SUPFAM" id="SSF89360">
    <property type="entry name" value="HesB-like domain"/>
    <property type="match status" value="1"/>
</dbReference>
<comment type="function">
    <text evidence="1">Involved in iron-sulfur cluster biogenesis. Binds a 4Fe-4S cluster, can transfer this cluster to apoproteins, and thereby intervenes in the maturation of Fe/S proteins. Could also act as a scaffold/chaperone for damaged Fe/S proteins.</text>
</comment>
<comment type="cofactor">
    <cofactor evidence="1">
        <name>[4Fe-4S] cluster</name>
        <dbReference type="ChEBI" id="CHEBI:49883"/>
    </cofactor>
    <text evidence="1">Binds 1 [4Fe-4S] cluster per subunit. The cluster is presumably bound at the interface of two monomers.</text>
</comment>
<comment type="subunit">
    <text evidence="1">Homodimer.</text>
</comment>
<comment type="similarity">
    <text evidence="1">Belongs to the NfuA family.</text>
</comment>
<sequence length="191" mass="21140">MIRITDAAQEHFLKLLAKQEEGTQIRVFVINPGTPNAECGVSYCPPDAVEASDTVVKFEKISAYVDELSSPYLEDADIDFVTDQLGSQLTLKAPNAKMRKVDDSAPLMERVEYVLQSQINPQLAGHGGRVTLMEITDDGLAILQFGGGCNGCSMVDFTLKEGIEKELLEKFPELKGVRDLTEHQRGEHSYY</sequence>
<proteinExistence type="inferred from homology"/>
<keyword id="KW-0004">4Fe-4S</keyword>
<keyword id="KW-0408">Iron</keyword>
<keyword id="KW-0411">Iron-sulfur</keyword>
<keyword id="KW-0479">Metal-binding</keyword>
<keyword id="KW-1185">Reference proteome</keyword>
<gene>
    <name evidence="1" type="primary">nfuA</name>
    <name type="ordered locus">ECA4134</name>
</gene>
<evidence type="ECO:0000255" key="1">
    <source>
        <dbReference type="HAMAP-Rule" id="MF_01637"/>
    </source>
</evidence>
<feature type="chain" id="PRO_0000268228" description="Fe/S biogenesis protein NfuA">
    <location>
        <begin position="1"/>
        <end position="191"/>
    </location>
</feature>
<feature type="binding site" evidence="1">
    <location>
        <position position="149"/>
    </location>
    <ligand>
        <name>[4Fe-4S] cluster</name>
        <dbReference type="ChEBI" id="CHEBI:49883"/>
    </ligand>
</feature>
<feature type="binding site" evidence="1">
    <location>
        <position position="152"/>
    </location>
    <ligand>
        <name>[4Fe-4S] cluster</name>
        <dbReference type="ChEBI" id="CHEBI:49883"/>
    </ligand>
</feature>